<name>TX32A_CHIGU</name>
<feature type="signal peptide" evidence="2">
    <location>
        <begin position="1"/>
        <end position="17"/>
    </location>
</feature>
<feature type="propeptide" id="PRO_0000398538" evidence="1">
    <location>
        <begin position="18"/>
        <end position="53"/>
    </location>
</feature>
<feature type="peptide" id="PRO_0000398539" description="U30-theraphotoxin-Cg1a">
    <location>
        <begin position="54"/>
        <end position="116"/>
    </location>
</feature>
<feature type="region of interest" description="Disordered" evidence="3">
    <location>
        <begin position="24"/>
        <end position="46"/>
    </location>
</feature>
<feature type="disulfide bond" evidence="4">
    <location>
        <begin position="55"/>
        <end position="69"/>
    </location>
</feature>
<feature type="disulfide bond" evidence="4">
    <location>
        <begin position="62"/>
        <end position="75"/>
    </location>
</feature>
<feature type="disulfide bond" evidence="4">
    <location>
        <begin position="66"/>
        <end position="112"/>
    </location>
</feature>
<feature type="disulfide bond" evidence="4">
    <location>
        <begin position="68"/>
        <end position="88"/>
    </location>
</feature>
<dbReference type="EMBL" id="EU233912">
    <property type="protein sequence ID" value="ABY71731.1"/>
    <property type="molecule type" value="mRNA"/>
</dbReference>
<dbReference type="ArachnoServer" id="AS000860">
    <property type="toxin name" value="U30-theraphotoxin-Cg1a"/>
</dbReference>
<dbReference type="GO" id="GO:0005576">
    <property type="term" value="C:extracellular region"/>
    <property type="evidence" value="ECO:0007669"/>
    <property type="project" value="UniProtKB-SubCell"/>
</dbReference>
<dbReference type="GO" id="GO:0099106">
    <property type="term" value="F:ion channel regulator activity"/>
    <property type="evidence" value="ECO:0007669"/>
    <property type="project" value="UniProtKB-KW"/>
</dbReference>
<dbReference type="GO" id="GO:0090729">
    <property type="term" value="F:toxin activity"/>
    <property type="evidence" value="ECO:0007669"/>
    <property type="project" value="UniProtKB-KW"/>
</dbReference>
<keyword id="KW-1015">Disulfide bond</keyword>
<keyword id="KW-0872">Ion channel impairing toxin</keyword>
<keyword id="KW-0960">Knottin</keyword>
<keyword id="KW-0964">Secreted</keyword>
<keyword id="KW-0732">Signal</keyword>
<keyword id="KW-0800">Toxin</keyword>
<proteinExistence type="evidence at transcript level"/>
<protein>
    <recommendedName>
        <fullName>U30-theraphotoxin-Cg1a</fullName>
        <shortName>U30-TRTX-Cg1a</shortName>
    </recommendedName>
    <alternativeName>
        <fullName>Jingzhaotoxin-62</fullName>
        <shortName>JZTX-62</shortName>
    </alternativeName>
</protein>
<evidence type="ECO:0000250" key="1"/>
<evidence type="ECO:0000255" key="2"/>
<evidence type="ECO:0000256" key="3">
    <source>
        <dbReference type="SAM" id="MobiDB-lite"/>
    </source>
</evidence>
<evidence type="ECO:0000305" key="4"/>
<organism>
    <name type="scientific">Chilobrachys guangxiensis</name>
    <name type="common">Chinese earth tiger tarantula</name>
    <name type="synonym">Chilobrachys jingzhao</name>
    <dbReference type="NCBI Taxonomy" id="278060"/>
    <lineage>
        <taxon>Eukaryota</taxon>
        <taxon>Metazoa</taxon>
        <taxon>Ecdysozoa</taxon>
        <taxon>Arthropoda</taxon>
        <taxon>Chelicerata</taxon>
        <taxon>Arachnida</taxon>
        <taxon>Araneae</taxon>
        <taxon>Mygalomorphae</taxon>
        <taxon>Theraphosidae</taxon>
        <taxon>Chilobrachys</taxon>
    </lineage>
</organism>
<sequence>MKLCVLTIASLLVTVTSLETQKEIAEGSELTREETPSLVEHKEDEAAAASEKRSCIEEWKTCEHSCECCGSSTICSSTWAEGKEIKLCKNEGGTFKKVLHFIQKGISKLKSCKEGN</sequence>
<reference key="1">
    <citation type="journal article" date="2008" name="Cell. Mol. Life Sci.">
        <title>Molecular diversity and evolution of cystine knot toxins of the tarantula Chilobrachys jingzhao.</title>
        <authorList>
            <person name="Chen J."/>
            <person name="Deng M."/>
            <person name="He Q."/>
            <person name="Meng E."/>
            <person name="Jiang L."/>
            <person name="Liao Z."/>
            <person name="Rong M."/>
            <person name="Liang S."/>
        </authorList>
    </citation>
    <scope>NUCLEOTIDE SEQUENCE [LARGE SCALE MRNA]</scope>
    <source>
        <tissue>Venom gland</tissue>
    </source>
</reference>
<accession>B1P1I1</accession>
<comment type="function">
    <text>Probable ion channel inhibitor.</text>
</comment>
<comment type="subcellular location">
    <subcellularLocation>
        <location evidence="1">Secreted</location>
    </subcellularLocation>
</comment>
<comment type="tissue specificity">
    <text>Expressed by the venom gland.</text>
</comment>
<comment type="domain">
    <text evidence="4">The presence of a 'disulfide through disulfide knot' structurally defines this protein as a knottin.</text>
</comment>
<comment type="similarity">
    <text evidence="4">Belongs to the neurotoxin 03 (Tx2) family. 02 subfamily. HNTX-XV sub-subfamily.</text>
</comment>